<comment type="function">
    <text evidence="9 10">Reversible hydration of carbon dioxide.</text>
</comment>
<comment type="catalytic activity">
    <reaction evidence="9 10">
        <text>hydrogencarbonate + H(+) = CO2 + H2O</text>
        <dbReference type="Rhea" id="RHEA:10748"/>
        <dbReference type="ChEBI" id="CHEBI:15377"/>
        <dbReference type="ChEBI" id="CHEBI:15378"/>
        <dbReference type="ChEBI" id="CHEBI:16526"/>
        <dbReference type="ChEBI" id="CHEBI:17544"/>
        <dbReference type="EC" id="4.2.1.1"/>
    </reaction>
</comment>
<comment type="cofactor">
    <cofactor evidence="8 9">
        <name>Zn(2+)</name>
        <dbReference type="ChEBI" id="CHEBI:29105"/>
    </cofactor>
</comment>
<comment type="activity regulation">
    <text evidence="8 10 11 12">Activated by proton donors such as imidazole and the dipeptide histidylhistidine (PubMed:16042381). Inhibited by coumarins and sulfonamide derivatives such as acetazolamide (PubMed:18618712, PubMed:19186056, PubMed:19206230).</text>
</comment>
<comment type="biophysicochemical properties">
    <kinetics>
        <KM evidence="10">52 mM for CO(2)</KM>
    </kinetics>
</comment>
<comment type="interaction">
    <interactant intactId="EBI-12208965">
        <id>P07451</id>
    </interactant>
    <interactant intactId="EBI-749311">
        <id>P37235</id>
        <label>HPCAL1</label>
    </interactant>
    <organismsDiffer>false</organismsDiffer>
    <experiments>3</experiments>
</comment>
<comment type="interaction">
    <interactant intactId="EBI-12208965">
        <id>P07451</id>
    </interactant>
    <interactant intactId="EBI-1044504">
        <id>Q9BS40</id>
        <label>LXN</label>
    </interactant>
    <organismsDiffer>false</organismsDiffer>
    <experiments>3</experiments>
</comment>
<comment type="subcellular location">
    <subcellularLocation>
        <location evidence="10">Cytoplasm</location>
    </subcellularLocation>
</comment>
<comment type="tissue specificity">
    <text evidence="13 14">Muscle specific.</text>
</comment>
<comment type="developmental stage">
    <text evidence="15">At 6 weeks gestation, transcripts accumulate at low levels in the somites and at high levels throughout the notochord. As gestation continues, CA3 becomes abundant in all developing muscle masses and continues at high to moderate levels in the notochord.</text>
</comment>
<comment type="PTM">
    <text evidence="3">S-thiolated both by thiol-disulfide exchange with glutathione disulfide and by oxyradical-initiated S-thiolation with reduced glutathione.</text>
</comment>
<comment type="PTM">
    <text evidence="3">S-glutathionylated in hepatocytes under oxidative stress.</text>
</comment>
<comment type="similarity">
    <text evidence="19">Belongs to the alpha-carbonic anhydrase family.</text>
</comment>
<keyword id="KW-0002">3D-structure</keyword>
<keyword id="KW-0007">Acetylation</keyword>
<keyword id="KW-0963">Cytoplasm</keyword>
<keyword id="KW-0318">Glutathionylation</keyword>
<keyword id="KW-0456">Lyase</keyword>
<keyword id="KW-0479">Metal-binding</keyword>
<keyword id="KW-0597">Phosphoprotein</keyword>
<keyword id="KW-1267">Proteomics identification</keyword>
<keyword id="KW-1185">Reference proteome</keyword>
<keyword id="KW-0862">Zinc</keyword>
<reference key="1">
    <citation type="journal article" date="1986" name="Gene">
        <title>Nucleotide sequence and derived amino acid sequence of a cDNA encoding human muscle carbonic anhydrase.</title>
        <authorList>
            <person name="Lloyd J."/>
            <person name="McMillan S."/>
            <person name="Hopkinson D."/>
            <person name="Edwards Y.H."/>
        </authorList>
    </citation>
    <scope>NUCLEOTIDE SEQUENCE [MRNA]</scope>
    <scope>TISSUE SPECIFICITY</scope>
</reference>
<reference key="2">
    <citation type="journal article" date="1986" name="Proc. Natl. Acad. Sci. U.S.A.">
        <title>Nucleotide sequence, tissue-specific expression, and chromosome location of human carbonic anhydrase III: the human CAIII gene is located on the same chromosome as the closely linked CAI and CAII genes.</title>
        <authorList>
            <person name="Wade R."/>
            <person name="Gunning P."/>
            <person name="Eddy R."/>
            <person name="Shows T."/>
            <person name="Kedes L."/>
        </authorList>
    </citation>
    <scope>NUCLEOTIDE SEQUENCE [GENOMIC DNA]</scope>
    <scope>TISSUE SPECIFICITY</scope>
</reference>
<reference key="3">
    <citation type="journal article" date="2004" name="Nat. Genet.">
        <title>Complete sequencing and characterization of 21,243 full-length human cDNAs.</title>
        <authorList>
            <person name="Ota T."/>
            <person name="Suzuki Y."/>
            <person name="Nishikawa T."/>
            <person name="Otsuki T."/>
            <person name="Sugiyama T."/>
            <person name="Irie R."/>
            <person name="Wakamatsu A."/>
            <person name="Hayashi K."/>
            <person name="Sato H."/>
            <person name="Nagai K."/>
            <person name="Kimura K."/>
            <person name="Makita H."/>
            <person name="Sekine M."/>
            <person name="Obayashi M."/>
            <person name="Nishi T."/>
            <person name="Shibahara T."/>
            <person name="Tanaka T."/>
            <person name="Ishii S."/>
            <person name="Yamamoto J."/>
            <person name="Saito K."/>
            <person name="Kawai Y."/>
            <person name="Isono Y."/>
            <person name="Nakamura Y."/>
            <person name="Nagahari K."/>
            <person name="Murakami K."/>
            <person name="Yasuda T."/>
            <person name="Iwayanagi T."/>
            <person name="Wagatsuma M."/>
            <person name="Shiratori A."/>
            <person name="Sudo H."/>
            <person name="Hosoiri T."/>
            <person name="Kaku Y."/>
            <person name="Kodaira H."/>
            <person name="Kondo H."/>
            <person name="Sugawara M."/>
            <person name="Takahashi M."/>
            <person name="Kanda K."/>
            <person name="Yokoi T."/>
            <person name="Furuya T."/>
            <person name="Kikkawa E."/>
            <person name="Omura Y."/>
            <person name="Abe K."/>
            <person name="Kamihara K."/>
            <person name="Katsuta N."/>
            <person name="Sato K."/>
            <person name="Tanikawa M."/>
            <person name="Yamazaki M."/>
            <person name="Ninomiya K."/>
            <person name="Ishibashi T."/>
            <person name="Yamashita H."/>
            <person name="Murakawa K."/>
            <person name="Fujimori K."/>
            <person name="Tanai H."/>
            <person name="Kimata M."/>
            <person name="Watanabe M."/>
            <person name="Hiraoka S."/>
            <person name="Chiba Y."/>
            <person name="Ishida S."/>
            <person name="Ono Y."/>
            <person name="Takiguchi S."/>
            <person name="Watanabe S."/>
            <person name="Yosida M."/>
            <person name="Hotuta T."/>
            <person name="Kusano J."/>
            <person name="Kanehori K."/>
            <person name="Takahashi-Fujii A."/>
            <person name="Hara H."/>
            <person name="Tanase T.-O."/>
            <person name="Nomura Y."/>
            <person name="Togiya S."/>
            <person name="Komai F."/>
            <person name="Hara R."/>
            <person name="Takeuchi K."/>
            <person name="Arita M."/>
            <person name="Imose N."/>
            <person name="Musashino K."/>
            <person name="Yuuki H."/>
            <person name="Oshima A."/>
            <person name="Sasaki N."/>
            <person name="Aotsuka S."/>
            <person name="Yoshikawa Y."/>
            <person name="Matsunawa H."/>
            <person name="Ichihara T."/>
            <person name="Shiohata N."/>
            <person name="Sano S."/>
            <person name="Moriya S."/>
            <person name="Momiyama H."/>
            <person name="Satoh N."/>
            <person name="Takami S."/>
            <person name="Terashima Y."/>
            <person name="Suzuki O."/>
            <person name="Nakagawa S."/>
            <person name="Senoh A."/>
            <person name="Mizoguchi H."/>
            <person name="Goto Y."/>
            <person name="Shimizu F."/>
            <person name="Wakebe H."/>
            <person name="Hishigaki H."/>
            <person name="Watanabe T."/>
            <person name="Sugiyama A."/>
            <person name="Takemoto M."/>
            <person name="Kawakami B."/>
            <person name="Yamazaki M."/>
            <person name="Watanabe K."/>
            <person name="Kumagai A."/>
            <person name="Itakura S."/>
            <person name="Fukuzumi Y."/>
            <person name="Fujimori Y."/>
            <person name="Komiyama M."/>
            <person name="Tashiro H."/>
            <person name="Tanigami A."/>
            <person name="Fujiwara T."/>
            <person name="Ono T."/>
            <person name="Yamada K."/>
            <person name="Fujii Y."/>
            <person name="Ozaki K."/>
            <person name="Hirao M."/>
            <person name="Ohmori Y."/>
            <person name="Kawabata A."/>
            <person name="Hikiji T."/>
            <person name="Kobatake N."/>
            <person name="Inagaki H."/>
            <person name="Ikema Y."/>
            <person name="Okamoto S."/>
            <person name="Okitani R."/>
            <person name="Kawakami T."/>
            <person name="Noguchi S."/>
            <person name="Itoh T."/>
            <person name="Shigeta K."/>
            <person name="Senba T."/>
            <person name="Matsumura K."/>
            <person name="Nakajima Y."/>
            <person name="Mizuno T."/>
            <person name="Morinaga M."/>
            <person name="Sasaki M."/>
            <person name="Togashi T."/>
            <person name="Oyama M."/>
            <person name="Hata H."/>
            <person name="Watanabe M."/>
            <person name="Komatsu T."/>
            <person name="Mizushima-Sugano J."/>
            <person name="Satoh T."/>
            <person name="Shirai Y."/>
            <person name="Takahashi Y."/>
            <person name="Nakagawa K."/>
            <person name="Okumura K."/>
            <person name="Nagase T."/>
            <person name="Nomura N."/>
            <person name="Kikuchi H."/>
            <person name="Masuho Y."/>
            <person name="Yamashita R."/>
            <person name="Nakai K."/>
            <person name="Yada T."/>
            <person name="Nakamura Y."/>
            <person name="Ohara O."/>
            <person name="Isogai T."/>
            <person name="Sugano S."/>
        </authorList>
    </citation>
    <scope>NUCLEOTIDE SEQUENCE [LARGE SCALE MRNA]</scope>
    <scope>VARIANT ILE-31</scope>
    <source>
        <tissue>Pericardium</tissue>
        <tissue>Skeletal muscle</tissue>
    </source>
</reference>
<reference key="4">
    <citation type="submission" date="2005-07" db="EMBL/GenBank/DDBJ databases">
        <authorList>
            <person name="Mural R.J."/>
            <person name="Istrail S."/>
            <person name="Sutton G.G."/>
            <person name="Florea L."/>
            <person name="Halpern A.L."/>
            <person name="Mobarry C.M."/>
            <person name="Lippert R."/>
            <person name="Walenz B."/>
            <person name="Shatkay H."/>
            <person name="Dew I."/>
            <person name="Miller J.R."/>
            <person name="Flanigan M.J."/>
            <person name="Edwards N.J."/>
            <person name="Bolanos R."/>
            <person name="Fasulo D."/>
            <person name="Halldorsson B.V."/>
            <person name="Hannenhalli S."/>
            <person name="Turner R."/>
            <person name="Yooseph S."/>
            <person name="Lu F."/>
            <person name="Nusskern D.R."/>
            <person name="Shue B.C."/>
            <person name="Zheng X.H."/>
            <person name="Zhong F."/>
            <person name="Delcher A.L."/>
            <person name="Huson D.H."/>
            <person name="Kravitz S.A."/>
            <person name="Mouchard L."/>
            <person name="Reinert K."/>
            <person name="Remington K.A."/>
            <person name="Clark A.G."/>
            <person name="Waterman M.S."/>
            <person name="Eichler E.E."/>
            <person name="Adams M.D."/>
            <person name="Hunkapiller M.W."/>
            <person name="Myers E.W."/>
            <person name="Venter J.C."/>
        </authorList>
    </citation>
    <scope>NUCLEOTIDE SEQUENCE [LARGE SCALE GENOMIC DNA]</scope>
    <scope>VARIANT ILE-31</scope>
</reference>
<reference key="5">
    <citation type="journal article" date="2004" name="Genome Res.">
        <title>The status, quality, and expansion of the NIH full-length cDNA project: the Mammalian Gene Collection (MGC).</title>
        <authorList>
            <consortium name="The MGC Project Team"/>
        </authorList>
    </citation>
    <scope>NUCLEOTIDE SEQUENCE [LARGE SCALE MRNA]</scope>
    <scope>VARIANT ILE-31</scope>
    <source>
        <tissue>Muscle</tissue>
    </source>
</reference>
<reference key="6">
    <citation type="journal article" date="1987" name="Genes Dev.">
        <title>Human muscle carbonic anhydrase: gene structure and DNA methylation patterns in fetal and adult tissues.</title>
        <authorList>
            <person name="Lloyd J."/>
            <person name="Brownson C."/>
            <person name="Tweedie S."/>
            <person name="Charlton J."/>
            <person name="Edwards Y.H."/>
        </authorList>
    </citation>
    <scope>PARTIAL NUCLEOTIDE SEQUENCE [GENOMIC DNA]</scope>
</reference>
<reference key="7">
    <citation type="journal article" date="1998" name="Gene">
        <title>Sequence comparisons and functional studies of the proximal promoter of the carbonic anhydrase 3 (CA3) gene.</title>
        <authorList>
            <person name="Sowden J."/>
            <person name="Smith H."/>
            <person name="Morrison K."/>
            <person name="Edwards Y."/>
        </authorList>
    </citation>
    <scope>NUCLEOTIDE SEQUENCE [GENOMIC DNA] OF 1-11</scope>
    <scope>DEVELOPMENTAL STAGE</scope>
</reference>
<reference key="8">
    <citation type="journal article" date="2009" name="Bioorg. Med. Chem. Lett.">
        <title>A thiabendazole sulfonamide shows potent inhibitory activity against mammalian and nematode alpha-carbonic anhydrases.</title>
        <authorList>
            <person name="Crocetti L."/>
            <person name="Maresca A."/>
            <person name="Temperini C."/>
            <person name="Hall R.A."/>
            <person name="Scozzafava A."/>
            <person name="Muehlschlegel F.A."/>
            <person name="Supuran C.T."/>
        </authorList>
    </citation>
    <scope>ACTIVITY REGULATION</scope>
</reference>
<reference key="9">
    <citation type="journal article" date="2009" name="J. Am. Chem. Soc.">
        <title>Non-zinc mediated inhibition of carbonic anhydrases: coumarins are a new class of suicide inhibitors.</title>
        <authorList>
            <person name="Maresca A."/>
            <person name="Temperini C."/>
            <person name="Vu H."/>
            <person name="Pham N.B."/>
            <person name="Poulsen S.-A."/>
            <person name="Scozzafava A."/>
            <person name="Quinn R.J."/>
            <person name="Supuran C.T."/>
        </authorList>
    </citation>
    <scope>ACTIVITY REGULATION</scope>
</reference>
<reference key="10">
    <citation type="journal article" date="2009" name="Proteins">
        <title>Crystal structure of human carbonic anhydrase XIII and its complex with the inhibitor acetazolamide.</title>
        <authorList>
            <person name="Di Fiore A."/>
            <person name="Monti S.M."/>
            <person name="Hilvo M."/>
            <person name="Parkkila S."/>
            <person name="Romano V."/>
            <person name="Scaloni A."/>
            <person name="Pedone C."/>
            <person name="Scozzafava A."/>
            <person name="Supuran C.T."/>
            <person name="De Simone G."/>
        </authorList>
    </citation>
    <scope>FUNCTION</scope>
    <scope>CATALYTIC ACTIVITY</scope>
    <scope>BIOPHYSICOCHEMICAL PROPERTIES</scope>
    <scope>SUBCELLULAR LOCATION</scope>
    <scope>ACTIVITY REGULATION</scope>
</reference>
<reference key="11">
    <citation type="journal article" date="2014" name="J. Proteomics">
        <title>An enzyme assisted RP-RPLC approach for in-depth analysis of human liver phosphoproteome.</title>
        <authorList>
            <person name="Bian Y."/>
            <person name="Song C."/>
            <person name="Cheng K."/>
            <person name="Dong M."/>
            <person name="Wang F."/>
            <person name="Huang J."/>
            <person name="Sun D."/>
            <person name="Wang L."/>
            <person name="Ye M."/>
            <person name="Zou H."/>
        </authorList>
    </citation>
    <scope>IDENTIFICATION BY MASS SPECTROMETRY [LARGE SCALE ANALYSIS]</scope>
    <source>
        <tissue>Liver</tissue>
    </source>
</reference>
<reference key="12">
    <citation type="journal article" date="2005" name="Biochemistry">
        <title>Human carbonic anhydrase III: structural and kinetic study of catalysis and proton transfer.</title>
        <authorList>
            <person name="Duda D.M."/>
            <person name="Tu C."/>
            <person name="Fisher S.Z."/>
            <person name="An H."/>
            <person name="Yoshioka C."/>
            <person name="Govindasamy L."/>
            <person name="Laipis P.J."/>
            <person name="Agbandje-McKenna M."/>
            <person name="Silverman D.N."/>
            <person name="McKenna R."/>
        </authorList>
    </citation>
    <scope>X-RAY CRYSTALLOGRAPHY (2.10 ANGSTROMS) OF 1-260 IN COMPLEX WITH ZINC ION</scope>
    <scope>MUTAGENESIS OF PHE-197</scope>
    <scope>ACTIVATION BY IMIDAZOLE AND HISTIDYLHISTIDINE</scope>
    <scope>ACTIVITY REGULATION</scope>
    <scope>COFACTOR</scope>
</reference>
<reference key="13">
    <citation type="journal article" date="2007" name="Proteins">
        <title>Structural and kinetic analysis of proton shuttle residues in the active site of human carbonic anhydrase III.</title>
        <authorList>
            <person name="Elder I."/>
            <person name="Fisher Z."/>
            <person name="Laipis P.J."/>
            <person name="Tu C."/>
            <person name="McKenna R."/>
            <person name="Silverman D.N."/>
        </authorList>
    </citation>
    <scope>X-RAY CRYSTALLOGRAPHY (1.70 ANGSTROMS) OF 1-260 IN COMPLEX WITH ZINC ION</scope>
    <scope>FUNCTION</scope>
    <scope>CATALYTIC ACTIVITY</scope>
    <scope>MUTAGENESIS OF LYS-64 AND ARG-67</scope>
    <scope>COFACTOR</scope>
</reference>
<organism>
    <name type="scientific">Homo sapiens</name>
    <name type="common">Human</name>
    <dbReference type="NCBI Taxonomy" id="9606"/>
    <lineage>
        <taxon>Eukaryota</taxon>
        <taxon>Metazoa</taxon>
        <taxon>Chordata</taxon>
        <taxon>Craniata</taxon>
        <taxon>Vertebrata</taxon>
        <taxon>Euteleostomi</taxon>
        <taxon>Mammalia</taxon>
        <taxon>Eutheria</taxon>
        <taxon>Euarchontoglires</taxon>
        <taxon>Primates</taxon>
        <taxon>Haplorrhini</taxon>
        <taxon>Catarrhini</taxon>
        <taxon>Hominidae</taxon>
        <taxon>Homo</taxon>
    </lineage>
</organism>
<proteinExistence type="evidence at protein level"/>
<feature type="initiator methionine" description="Removed" evidence="2">
    <location>
        <position position="1"/>
    </location>
</feature>
<feature type="chain" id="PRO_0000077426" description="Carbonic anhydrase 3">
    <location>
        <begin position="2"/>
        <end position="260"/>
    </location>
</feature>
<feature type="domain" description="Alpha-carbonic anhydrase" evidence="5">
    <location>
        <begin position="3"/>
        <end position="259"/>
    </location>
</feature>
<feature type="region of interest" description="Involved in proton transfer" evidence="9">
    <location>
        <begin position="64"/>
        <end position="67"/>
    </location>
</feature>
<feature type="binding site" evidence="8 9">
    <location>
        <position position="94"/>
    </location>
    <ligand>
        <name>Zn(2+)</name>
        <dbReference type="ChEBI" id="CHEBI:29105"/>
        <note>catalytic</note>
    </ligand>
</feature>
<feature type="binding site" evidence="8 9">
    <location>
        <position position="96"/>
    </location>
    <ligand>
        <name>Zn(2+)</name>
        <dbReference type="ChEBI" id="CHEBI:29105"/>
        <note>catalytic</note>
    </ligand>
</feature>
<feature type="binding site" evidence="8 9">
    <location>
        <position position="119"/>
    </location>
    <ligand>
        <name>Zn(2+)</name>
        <dbReference type="ChEBI" id="CHEBI:29105"/>
        <note>catalytic</note>
    </ligand>
</feature>
<feature type="binding site" evidence="1">
    <location>
        <begin position="198"/>
        <end position="199"/>
    </location>
    <ligand>
        <name>substrate</name>
    </ligand>
</feature>
<feature type="modified residue" description="N-acetylalanine" evidence="2">
    <location>
        <position position="2"/>
    </location>
</feature>
<feature type="modified residue" description="Phosphoserine" evidence="3">
    <location>
        <position position="29"/>
    </location>
</feature>
<feature type="modified residue" description="Phosphoserine" evidence="3">
    <location>
        <position position="43"/>
    </location>
</feature>
<feature type="modified residue" description="Phosphoserine" evidence="3">
    <location>
        <position position="48"/>
    </location>
</feature>
<feature type="modified residue" description="Phosphoserine" evidence="3">
    <location>
        <position position="50"/>
    </location>
</feature>
<feature type="modified residue" description="Phosphoserine" evidence="3">
    <location>
        <position position="55"/>
    </location>
</feature>
<feature type="modified residue" description="Phosphothreonine" evidence="3">
    <location>
        <position position="73"/>
    </location>
</feature>
<feature type="modified residue" description="Phosphotyrosine" evidence="3">
    <location>
        <position position="127"/>
    </location>
</feature>
<feature type="modified residue" description="Phosphothreonine" evidence="3">
    <location>
        <position position="129"/>
    </location>
</feature>
<feature type="modified residue" description="Phosphothreonine" evidence="4">
    <location>
        <position position="176"/>
    </location>
</feature>
<feature type="modified residue" description="S-glutathionyl cysteine" evidence="3">
    <location>
        <position position="182"/>
    </location>
</feature>
<feature type="modified residue" description="S-glutathionyl cysteine" evidence="3">
    <location>
        <position position="187"/>
    </location>
</feature>
<feature type="modified residue" description="Phosphothreonine" evidence="3">
    <location>
        <position position="216"/>
    </location>
</feature>
<feature type="modified residue" description="Phosphoserine" evidence="3">
    <location>
        <position position="219"/>
    </location>
</feature>
<feature type="sequence variant" id="VAR_016180" description="In dbSNP:rs20571." evidence="6 7 16">
    <original>V</original>
    <variation>I</variation>
    <location>
        <position position="31"/>
    </location>
</feature>
<feature type="mutagenesis site" description="Enhanced proton transfer in catalysis." evidence="9">
    <original>K</original>
    <variation>H</variation>
    <location>
        <position position="64"/>
    </location>
</feature>
<feature type="mutagenesis site" description="Enhanced proton transfer in catalysis." evidence="9">
    <original>R</original>
    <variation>H</variation>
    <location>
        <position position="67"/>
    </location>
</feature>
<feature type="mutagenesis site" description="Enhanced activity by at least 10-fold." evidence="8">
    <original>F</original>
    <variation>L</variation>
    <location>
        <position position="197"/>
    </location>
</feature>
<feature type="turn" evidence="22">
    <location>
        <begin position="9"/>
        <end position="11"/>
    </location>
</feature>
<feature type="turn" evidence="22">
    <location>
        <begin position="13"/>
        <end position="15"/>
    </location>
</feature>
<feature type="helix" evidence="22">
    <location>
        <begin position="16"/>
        <end position="18"/>
    </location>
</feature>
<feature type="helix" evidence="22">
    <location>
        <begin position="21"/>
        <end position="24"/>
    </location>
</feature>
<feature type="strand" evidence="21">
    <location>
        <begin position="25"/>
        <end position="27"/>
    </location>
</feature>
<feature type="helix" evidence="22">
    <location>
        <begin position="35"/>
        <end position="37"/>
    </location>
</feature>
<feature type="strand" evidence="22">
    <location>
        <begin position="47"/>
        <end position="50"/>
    </location>
</feature>
<feature type="helix" evidence="22">
    <location>
        <begin position="53"/>
        <end position="55"/>
    </location>
</feature>
<feature type="strand" evidence="22">
    <location>
        <begin position="56"/>
        <end position="61"/>
    </location>
</feature>
<feature type="strand" evidence="22">
    <location>
        <begin position="66"/>
        <end position="70"/>
    </location>
</feature>
<feature type="strand" evidence="22">
    <location>
        <begin position="73"/>
        <end position="75"/>
    </location>
</feature>
<feature type="strand" evidence="22">
    <location>
        <begin position="77"/>
        <end position="81"/>
    </location>
</feature>
<feature type="strand" evidence="22">
    <location>
        <begin position="88"/>
        <end position="97"/>
    </location>
</feature>
<feature type="strand" evidence="22">
    <location>
        <begin position="106"/>
        <end position="109"/>
    </location>
</feature>
<feature type="strand" evidence="22">
    <location>
        <begin position="115"/>
        <end position="123"/>
    </location>
</feature>
<feature type="helix" evidence="22">
    <location>
        <begin position="125"/>
        <end position="127"/>
    </location>
</feature>
<feature type="helix" evidence="22">
    <location>
        <begin position="130"/>
        <end position="133"/>
    </location>
</feature>
<feature type="strand" evidence="22">
    <location>
        <begin position="139"/>
        <end position="151"/>
    </location>
</feature>
<feature type="helix" evidence="22">
    <location>
        <begin position="154"/>
        <end position="160"/>
    </location>
</feature>
<feature type="helix" evidence="22">
    <location>
        <begin position="161"/>
        <end position="165"/>
    </location>
</feature>
<feature type="strand" evidence="22">
    <location>
        <begin position="172"/>
        <end position="174"/>
    </location>
</feature>
<feature type="helix" evidence="22">
    <location>
        <begin position="180"/>
        <end position="183"/>
    </location>
</feature>
<feature type="strand" evidence="22">
    <location>
        <begin position="190"/>
        <end position="195"/>
    </location>
</feature>
<feature type="strand" evidence="22">
    <location>
        <begin position="206"/>
        <end position="213"/>
    </location>
</feature>
<feature type="strand" evidence="22">
    <location>
        <begin position="215"/>
        <end position="217"/>
    </location>
</feature>
<feature type="helix" evidence="22">
    <location>
        <begin position="219"/>
        <end position="225"/>
    </location>
</feature>
<feature type="strand" evidence="22">
    <location>
        <begin position="229"/>
        <end position="231"/>
    </location>
</feature>
<feature type="strand" evidence="22">
    <location>
        <begin position="233"/>
        <end position="236"/>
    </location>
</feature>
<feature type="strand" evidence="22">
    <location>
        <begin position="256"/>
        <end position="258"/>
    </location>
</feature>
<protein>
    <recommendedName>
        <fullName evidence="19">Carbonic anhydrase 3</fullName>
        <ecNumber>4.2.1.1</ecNumber>
    </recommendedName>
    <alternativeName>
        <fullName evidence="17">Carbonate dehydratase III</fullName>
    </alternativeName>
    <alternativeName>
        <fullName evidence="17">Carbonic anhydrase III</fullName>
        <shortName evidence="17">CA-III</shortName>
    </alternativeName>
</protein>
<dbReference type="EC" id="4.2.1.1"/>
<dbReference type="EMBL" id="M29458">
    <property type="protein sequence ID" value="AAA52293.1"/>
    <property type="molecule type" value="Genomic_DNA"/>
</dbReference>
<dbReference type="EMBL" id="M29452">
    <property type="status" value="NOT_ANNOTATED_CDS"/>
    <property type="molecule type" value="Genomic_DNA"/>
</dbReference>
<dbReference type="EMBL" id="AK096880">
    <property type="protein sequence ID" value="BAG53390.1"/>
    <property type="molecule type" value="mRNA"/>
</dbReference>
<dbReference type="EMBL" id="AK313254">
    <property type="protein sequence ID" value="BAG36064.1"/>
    <property type="molecule type" value="mRNA"/>
</dbReference>
<dbReference type="EMBL" id="CH471068">
    <property type="protein sequence ID" value="EAW87133.1"/>
    <property type="molecule type" value="Genomic_DNA"/>
</dbReference>
<dbReference type="EMBL" id="BC004897">
    <property type="protein sequence ID" value="AAH04897.1"/>
    <property type="molecule type" value="mRNA"/>
</dbReference>
<dbReference type="EMBL" id="AJ006473">
    <property type="protein sequence ID" value="CAA07056.1"/>
    <property type="molecule type" value="Genomic_DNA"/>
</dbReference>
<dbReference type="CCDS" id="CCDS6238.1"/>
<dbReference type="PIR" id="A26658">
    <property type="entry name" value="CRHU3"/>
</dbReference>
<dbReference type="RefSeq" id="NP_005172.1">
    <property type="nucleotide sequence ID" value="NM_005181.4"/>
</dbReference>
<dbReference type="PDB" id="1Z93">
    <property type="method" value="X-ray"/>
    <property type="resolution" value="2.10 A"/>
    <property type="chains" value="A=1-260"/>
</dbReference>
<dbReference type="PDB" id="1Z97">
    <property type="method" value="X-ray"/>
    <property type="resolution" value="2.10 A"/>
    <property type="chains" value="A=1-260"/>
</dbReference>
<dbReference type="PDB" id="2HFW">
    <property type="method" value="X-ray"/>
    <property type="resolution" value="2.50 A"/>
    <property type="chains" value="A=1-259"/>
</dbReference>
<dbReference type="PDB" id="3UYN">
    <property type="method" value="X-ray"/>
    <property type="resolution" value="2.60 A"/>
    <property type="chains" value="A=1-260"/>
</dbReference>
<dbReference type="PDB" id="3UYQ">
    <property type="method" value="X-ray"/>
    <property type="resolution" value="1.70 A"/>
    <property type="chains" value="A=1-260"/>
</dbReference>
<dbReference type="PDBsum" id="1Z93"/>
<dbReference type="PDBsum" id="1Z97"/>
<dbReference type="PDBsum" id="2HFW"/>
<dbReference type="PDBsum" id="3UYN"/>
<dbReference type="PDBsum" id="3UYQ"/>
<dbReference type="SMR" id="P07451"/>
<dbReference type="BioGRID" id="107216">
    <property type="interactions" value="30"/>
</dbReference>
<dbReference type="FunCoup" id="P07451">
    <property type="interactions" value="501"/>
</dbReference>
<dbReference type="IntAct" id="P07451">
    <property type="interactions" value="5"/>
</dbReference>
<dbReference type="STRING" id="9606.ENSP00000285381"/>
<dbReference type="BindingDB" id="P07451"/>
<dbReference type="ChEMBL" id="CHEMBL2885"/>
<dbReference type="DrugBank" id="DB00819">
    <property type="generic name" value="Acetazolamide"/>
</dbReference>
<dbReference type="DrugBank" id="DB00562">
    <property type="generic name" value="Benzthiazide"/>
</dbReference>
<dbReference type="DrugBank" id="DB01194">
    <property type="generic name" value="Brinzolamide"/>
</dbReference>
<dbReference type="DrugBank" id="DB00482">
    <property type="generic name" value="Celecoxib"/>
</dbReference>
<dbReference type="DrugBank" id="DB00606">
    <property type="generic name" value="Cyclothiazide"/>
</dbReference>
<dbReference type="DrugBank" id="DB01144">
    <property type="generic name" value="Diclofenamide"/>
</dbReference>
<dbReference type="DrugBank" id="DB00869">
    <property type="generic name" value="Dorzolamide"/>
</dbReference>
<dbReference type="DrugBank" id="DB08846">
    <property type="generic name" value="Ellagic acid"/>
</dbReference>
<dbReference type="DrugBank" id="DB00311">
    <property type="generic name" value="Ethoxzolamide"/>
</dbReference>
<dbReference type="DrugBank" id="DB00703">
    <property type="generic name" value="Methazolamide"/>
</dbReference>
<dbReference type="DrugBank" id="DB12418">
    <property type="generic name" value="Saccharin"/>
</dbReference>
<dbReference type="DrugBank" id="DB00391">
    <property type="generic name" value="Sulpiride"/>
</dbReference>
<dbReference type="DrugBank" id="DB00273">
    <property type="generic name" value="Topiramate"/>
</dbReference>
<dbReference type="DrugBank" id="DB00580">
    <property type="generic name" value="Valdecoxib"/>
</dbReference>
<dbReference type="DrugBank" id="DB00909">
    <property type="generic name" value="Zonisamide"/>
</dbReference>
<dbReference type="DrugCentral" id="P07451"/>
<dbReference type="GlyGen" id="P07451">
    <property type="glycosylation" value="1 site, 1 O-linked glycan (1 site)"/>
</dbReference>
<dbReference type="iPTMnet" id="P07451"/>
<dbReference type="PhosphoSitePlus" id="P07451"/>
<dbReference type="BioMuta" id="CA3"/>
<dbReference type="DMDM" id="134047703"/>
<dbReference type="jPOST" id="P07451"/>
<dbReference type="MassIVE" id="P07451"/>
<dbReference type="PaxDb" id="9606-ENSP00000285381"/>
<dbReference type="PeptideAtlas" id="P07451"/>
<dbReference type="ProteomicsDB" id="52004"/>
<dbReference type="Antibodypedia" id="3326">
    <property type="antibodies" value="465 antibodies from 35 providers"/>
</dbReference>
<dbReference type="DNASU" id="761"/>
<dbReference type="Ensembl" id="ENST00000285381.3">
    <property type="protein sequence ID" value="ENSP00000285381.2"/>
    <property type="gene ID" value="ENSG00000164879.7"/>
</dbReference>
<dbReference type="GeneID" id="761"/>
<dbReference type="KEGG" id="hsa:761"/>
<dbReference type="MANE-Select" id="ENST00000285381.3">
    <property type="protein sequence ID" value="ENSP00000285381.2"/>
    <property type="RefSeq nucleotide sequence ID" value="NM_005181.4"/>
    <property type="RefSeq protein sequence ID" value="NP_005172.1"/>
</dbReference>
<dbReference type="AGR" id="HGNC:1374"/>
<dbReference type="CTD" id="761"/>
<dbReference type="DisGeNET" id="761"/>
<dbReference type="GeneCards" id="CA3"/>
<dbReference type="HGNC" id="HGNC:1374">
    <property type="gene designation" value="CA3"/>
</dbReference>
<dbReference type="HPA" id="ENSG00000164879">
    <property type="expression patterns" value="Tissue enriched (skeletal)"/>
</dbReference>
<dbReference type="MIM" id="114750">
    <property type="type" value="gene"/>
</dbReference>
<dbReference type="neXtProt" id="NX_P07451"/>
<dbReference type="OpenTargets" id="ENSG00000164879"/>
<dbReference type="PharmGKB" id="PA25990"/>
<dbReference type="VEuPathDB" id="HostDB:ENSG00000164879"/>
<dbReference type="eggNOG" id="KOG0382">
    <property type="taxonomic scope" value="Eukaryota"/>
</dbReference>
<dbReference type="GeneTree" id="ENSGT00940000159435"/>
<dbReference type="HOGENOM" id="CLU_039326_2_1_1"/>
<dbReference type="InParanoid" id="P07451"/>
<dbReference type="OMA" id="NYPMAKG"/>
<dbReference type="OrthoDB" id="429145at2759"/>
<dbReference type="PAN-GO" id="P07451">
    <property type="GO annotations" value="3 GO annotations based on evolutionary models"/>
</dbReference>
<dbReference type="PhylomeDB" id="P07451"/>
<dbReference type="TreeFam" id="TF316425"/>
<dbReference type="BRENDA" id="4.2.1.1">
    <property type="organism ID" value="2681"/>
</dbReference>
<dbReference type="PathwayCommons" id="P07451"/>
<dbReference type="Reactome" id="R-HSA-1475029">
    <property type="pathway name" value="Reversible hydration of carbon dioxide"/>
</dbReference>
<dbReference type="SignaLink" id="P07451"/>
<dbReference type="BioGRID-ORCS" id="761">
    <property type="hits" value="11 hits in 1156 CRISPR screens"/>
</dbReference>
<dbReference type="ChiTaRS" id="CA3">
    <property type="organism name" value="human"/>
</dbReference>
<dbReference type="EvolutionaryTrace" id="P07451"/>
<dbReference type="GeneWiki" id="Carbonic_anhydrase_III,_muscle_specific"/>
<dbReference type="GenomeRNAi" id="761"/>
<dbReference type="Pharos" id="P07451">
    <property type="development level" value="Tclin"/>
</dbReference>
<dbReference type="PRO" id="PR:P07451"/>
<dbReference type="Proteomes" id="UP000005640">
    <property type="component" value="Chromosome 8"/>
</dbReference>
<dbReference type="RNAct" id="P07451">
    <property type="molecule type" value="protein"/>
</dbReference>
<dbReference type="Bgee" id="ENSG00000164879">
    <property type="expression patterns" value="Expressed in skeletal muscle tissue of rectus abdominis and 141 other cell types or tissues"/>
</dbReference>
<dbReference type="ExpressionAtlas" id="P07451">
    <property type="expression patterns" value="baseline and differential"/>
</dbReference>
<dbReference type="GO" id="GO:0005737">
    <property type="term" value="C:cytoplasm"/>
    <property type="evidence" value="ECO:0000318"/>
    <property type="project" value="GO_Central"/>
</dbReference>
<dbReference type="GO" id="GO:0005829">
    <property type="term" value="C:cytosol"/>
    <property type="evidence" value="ECO:0000314"/>
    <property type="project" value="UniProtKB"/>
</dbReference>
<dbReference type="GO" id="GO:0004089">
    <property type="term" value="F:carbonate dehydratase activity"/>
    <property type="evidence" value="ECO:0000314"/>
    <property type="project" value="UniProtKB"/>
</dbReference>
<dbReference type="GO" id="GO:0016151">
    <property type="term" value="F:nickel cation binding"/>
    <property type="evidence" value="ECO:0007669"/>
    <property type="project" value="Ensembl"/>
</dbReference>
<dbReference type="GO" id="GO:0016791">
    <property type="term" value="F:phosphatase activity"/>
    <property type="evidence" value="ECO:0007669"/>
    <property type="project" value="Ensembl"/>
</dbReference>
<dbReference type="GO" id="GO:0008270">
    <property type="term" value="F:zinc ion binding"/>
    <property type="evidence" value="ECO:0007669"/>
    <property type="project" value="InterPro"/>
</dbReference>
<dbReference type="GO" id="GO:0009617">
    <property type="term" value="P:response to bacterium"/>
    <property type="evidence" value="ECO:0007669"/>
    <property type="project" value="Ensembl"/>
</dbReference>
<dbReference type="GO" id="GO:0045471">
    <property type="term" value="P:response to ethanol"/>
    <property type="evidence" value="ECO:0007669"/>
    <property type="project" value="Ensembl"/>
</dbReference>
<dbReference type="GO" id="GO:0006979">
    <property type="term" value="P:response to oxidative stress"/>
    <property type="evidence" value="ECO:0007669"/>
    <property type="project" value="Ensembl"/>
</dbReference>
<dbReference type="CDD" id="cd03119">
    <property type="entry name" value="alpha_CA_I_II_III_XIII"/>
    <property type="match status" value="1"/>
</dbReference>
<dbReference type="FunFam" id="3.10.200.10:FF:000001">
    <property type="entry name" value="Carbonic anhydrase 2"/>
    <property type="match status" value="1"/>
</dbReference>
<dbReference type="Gene3D" id="3.10.200.10">
    <property type="entry name" value="Alpha carbonic anhydrase"/>
    <property type="match status" value="1"/>
</dbReference>
<dbReference type="InterPro" id="IPR001148">
    <property type="entry name" value="CA_dom"/>
</dbReference>
<dbReference type="InterPro" id="IPR036398">
    <property type="entry name" value="CA_dom_sf"/>
</dbReference>
<dbReference type="InterPro" id="IPR023561">
    <property type="entry name" value="Carbonic_anhydrase_a-class"/>
</dbReference>
<dbReference type="InterPro" id="IPR018338">
    <property type="entry name" value="Carbonic_anhydrase_a-class_CS"/>
</dbReference>
<dbReference type="PANTHER" id="PTHR18952">
    <property type="entry name" value="CARBONIC ANHYDRASE"/>
    <property type="match status" value="1"/>
</dbReference>
<dbReference type="PANTHER" id="PTHR18952:SF127">
    <property type="entry name" value="CARBONIC ANHYDRASE 3"/>
    <property type="match status" value="1"/>
</dbReference>
<dbReference type="Pfam" id="PF00194">
    <property type="entry name" value="Carb_anhydrase"/>
    <property type="match status" value="1"/>
</dbReference>
<dbReference type="SMART" id="SM01057">
    <property type="entry name" value="Carb_anhydrase"/>
    <property type="match status" value="1"/>
</dbReference>
<dbReference type="SUPFAM" id="SSF51069">
    <property type="entry name" value="Carbonic anhydrase"/>
    <property type="match status" value="1"/>
</dbReference>
<dbReference type="PROSITE" id="PS00162">
    <property type="entry name" value="ALPHA_CA_1"/>
    <property type="match status" value="1"/>
</dbReference>
<dbReference type="PROSITE" id="PS51144">
    <property type="entry name" value="ALPHA_CA_2"/>
    <property type="match status" value="1"/>
</dbReference>
<accession>P07451</accession>
<accession>B2R867</accession>
<accession>B3KUC8</accession>
<accession>O60842</accession>
<name>CAH3_HUMAN</name>
<sequence length="260" mass="29557">MAKEWGYASHNGPDHWHELFPNAKGENQSPVELHTKDIRHDPSLQPWSVSYDGGSAKTILNNGKTCRVVFDDTYDRSMLRGGPLPGPYRLRQFHLHWGSSDDHGSEHTVDGVKYAAELHLVHWNPKYNTFKEALKQRDGIAVIGIFLKIGHENGEFQIFLDALDKIKTKGKEAPFTKFDPSCLFPACRDYWTYQGSFTTPPCEECIVWLLLKEPMTVSSDQMAKLRSLLSSAENEPPVPLVSNWRPPQPINNRVVRASFK</sequence>
<evidence type="ECO:0000250" key="1">
    <source>
        <dbReference type="UniProtKB" id="P00918"/>
    </source>
</evidence>
<evidence type="ECO:0000250" key="2">
    <source>
        <dbReference type="UniProtKB" id="P07450"/>
    </source>
</evidence>
<evidence type="ECO:0000250" key="3">
    <source>
        <dbReference type="UniProtKB" id="P14141"/>
    </source>
</evidence>
<evidence type="ECO:0000250" key="4">
    <source>
        <dbReference type="UniProtKB" id="P16015"/>
    </source>
</evidence>
<evidence type="ECO:0000255" key="5">
    <source>
        <dbReference type="PROSITE-ProRule" id="PRU01134"/>
    </source>
</evidence>
<evidence type="ECO:0000269" key="6">
    <source>
    </source>
</evidence>
<evidence type="ECO:0000269" key="7">
    <source>
    </source>
</evidence>
<evidence type="ECO:0000269" key="8">
    <source>
    </source>
</evidence>
<evidence type="ECO:0000269" key="9">
    <source>
    </source>
</evidence>
<evidence type="ECO:0000269" key="10">
    <source>
    </source>
</evidence>
<evidence type="ECO:0000269" key="11">
    <source>
    </source>
</evidence>
<evidence type="ECO:0000269" key="12">
    <source>
    </source>
</evidence>
<evidence type="ECO:0000269" key="13">
    <source>
    </source>
</evidence>
<evidence type="ECO:0000269" key="14">
    <source>
    </source>
</evidence>
<evidence type="ECO:0000269" key="15">
    <source>
    </source>
</evidence>
<evidence type="ECO:0000269" key="16">
    <source ref="4"/>
</evidence>
<evidence type="ECO:0000303" key="17">
    <source>
    </source>
</evidence>
<evidence type="ECO:0000303" key="18">
    <source>
    </source>
</evidence>
<evidence type="ECO:0000305" key="19"/>
<evidence type="ECO:0000312" key="20">
    <source>
        <dbReference type="HGNC" id="HGNC:1374"/>
    </source>
</evidence>
<evidence type="ECO:0007829" key="21">
    <source>
        <dbReference type="PDB" id="2HFW"/>
    </source>
</evidence>
<evidence type="ECO:0007829" key="22">
    <source>
        <dbReference type="PDB" id="3UYQ"/>
    </source>
</evidence>
<gene>
    <name evidence="18 20" type="primary">CA3</name>
</gene>